<gene>
    <name type="primary">AVP</name>
</gene>
<accession>P01184</accession>
<sequence>CYFQNCPRGXXXAMSDLELRQCLPCGPGGKGRCFGPSICCGDELGCFMGTAEALRCQEENYLPSPCQSGQKPCGSGGRCAAAGICCNDESCVTEPECREGASFPRRA</sequence>
<protein>
    <recommendedName>
        <fullName>Vasopressin-neurophysin 2</fullName>
    </recommendedName>
    <component>
        <recommendedName>
            <fullName>Arg-vasopressin</fullName>
        </recommendedName>
        <alternativeName>
            <fullName>Arginine-vasopressin</fullName>
        </alternativeName>
    </component>
    <component>
        <recommendedName>
            <fullName>Neurophysin 2</fullName>
        </recommendedName>
    </component>
</protein>
<proteinExistence type="evidence at protein level"/>
<reference key="1">
    <citation type="journal article" date="1964" name="Nature">
        <title>Isolation of finback whale oxytocin and vasopressin.</title>
        <authorList>
            <person name="Acher R."/>
            <person name="Chauvet J."/>
            <person name="Chauvet M.-T."/>
        </authorList>
    </citation>
    <scope>PROTEIN SEQUENCE OF 1-9</scope>
    <scope>AMIDATION AT GLY-9</scope>
</reference>
<reference key="2">
    <citation type="journal article" date="1978" name="FEBS Lett.">
        <title>Phylogeny of neurophysins: complete amino acid sequence of whale (Balaenoptera physalus) MSEL-neurophysin.</title>
        <authorList>
            <person name="Chauvet M.-T."/>
            <person name="Codogno P."/>
            <person name="Chauvet J."/>
            <person name="Acher R."/>
        </authorList>
    </citation>
    <scope>PROTEIN SEQUENCE OF 13-107</scope>
</reference>
<feature type="peptide" id="PRO_0000020507" description="Arg-vasopressin">
    <location>
        <begin position="1"/>
        <end position="9"/>
    </location>
</feature>
<feature type="chain" id="PRO_0000020508" description="Neurophysin 2">
    <location>
        <begin position="13"/>
        <end position="107"/>
    </location>
</feature>
<feature type="site" description="Important for agonist activity on V1aR/AVPR1A" evidence="2">
    <location>
        <position position="9"/>
    </location>
</feature>
<feature type="modified residue" description="Glycine amide" evidence="3">
    <location>
        <position position="9"/>
    </location>
</feature>
<feature type="disulfide bond">
    <location>
        <begin position="1"/>
        <end position="6"/>
    </location>
</feature>
<feature type="disulfide bond" evidence="1">
    <location>
        <begin position="22"/>
        <end position="66"/>
    </location>
</feature>
<feature type="disulfide bond" evidence="1">
    <location>
        <begin position="25"/>
        <end position="39"/>
    </location>
</feature>
<feature type="disulfide bond" evidence="1">
    <location>
        <begin position="33"/>
        <end position="56"/>
    </location>
</feature>
<feature type="disulfide bond" evidence="1">
    <location>
        <begin position="40"/>
        <end position="46"/>
    </location>
</feature>
<feature type="disulfide bond" evidence="1">
    <location>
        <begin position="73"/>
        <end position="85"/>
    </location>
</feature>
<feature type="disulfide bond" evidence="1">
    <location>
        <begin position="79"/>
        <end position="97"/>
    </location>
</feature>
<feature type="disulfide bond" evidence="1">
    <location>
        <begin position="86"/>
        <end position="91"/>
    </location>
</feature>
<feature type="non-terminal residue">
    <location>
        <position position="1"/>
    </location>
</feature>
<feature type="non-terminal residue">
    <location>
        <position position="107"/>
    </location>
</feature>
<name>NEU2_BALPH</name>
<organism>
    <name type="scientific">Balaenoptera physalus</name>
    <name type="common">Fin whale</name>
    <name type="synonym">Balaena physalus</name>
    <dbReference type="NCBI Taxonomy" id="9770"/>
    <lineage>
        <taxon>Eukaryota</taxon>
        <taxon>Metazoa</taxon>
        <taxon>Chordata</taxon>
        <taxon>Craniata</taxon>
        <taxon>Vertebrata</taxon>
        <taxon>Euteleostomi</taxon>
        <taxon>Mammalia</taxon>
        <taxon>Eutheria</taxon>
        <taxon>Laurasiatheria</taxon>
        <taxon>Artiodactyla</taxon>
        <taxon>Whippomorpha</taxon>
        <taxon>Cetacea</taxon>
        <taxon>Mysticeti</taxon>
        <taxon>Balaenopteridae</taxon>
        <taxon>Balaenoptera</taxon>
    </lineage>
</organism>
<keyword id="KW-0027">Amidation</keyword>
<keyword id="KW-0165">Cleavage on pair of basic residues</keyword>
<keyword id="KW-0903">Direct protein sequencing</keyword>
<keyword id="KW-1015">Disulfide bond</keyword>
<keyword id="KW-0372">Hormone</keyword>
<keyword id="KW-0964">Secreted</keyword>
<keyword id="KW-0838">Vasoactive</keyword>
<keyword id="KW-0839">Vasoconstrictor</keyword>
<evidence type="ECO:0000250" key="1">
    <source>
        <dbReference type="UniProtKB" id="P01175"/>
    </source>
</evidence>
<evidence type="ECO:0000250" key="2">
    <source>
        <dbReference type="UniProtKB" id="P01185"/>
    </source>
</evidence>
<evidence type="ECO:0000269" key="3">
    <source>
    </source>
</evidence>
<evidence type="ECO:0000305" key="4"/>
<dbReference type="PIR" id="B93147">
    <property type="entry name" value="NVWH2F"/>
</dbReference>
<dbReference type="GO" id="GO:0005615">
    <property type="term" value="C:extracellular space"/>
    <property type="evidence" value="ECO:0007669"/>
    <property type="project" value="TreeGrafter"/>
</dbReference>
<dbReference type="GO" id="GO:0030141">
    <property type="term" value="C:secretory granule"/>
    <property type="evidence" value="ECO:0007669"/>
    <property type="project" value="TreeGrafter"/>
</dbReference>
<dbReference type="GO" id="GO:0005185">
    <property type="term" value="F:neurohypophyseal hormone activity"/>
    <property type="evidence" value="ECO:0007669"/>
    <property type="project" value="InterPro"/>
</dbReference>
<dbReference type="GO" id="GO:0031894">
    <property type="term" value="F:V1A vasopressin receptor binding"/>
    <property type="evidence" value="ECO:0007669"/>
    <property type="project" value="TreeGrafter"/>
</dbReference>
<dbReference type="GO" id="GO:0042310">
    <property type="term" value="P:vasoconstriction"/>
    <property type="evidence" value="ECO:0007669"/>
    <property type="project" value="UniProtKB-KW"/>
</dbReference>
<dbReference type="FunFam" id="2.60.9.10:FF:000001">
    <property type="entry name" value="oxytocin-neurophysin 1"/>
    <property type="match status" value="1"/>
</dbReference>
<dbReference type="Gene3D" id="2.60.9.10">
    <property type="entry name" value="Neurohypophysial hormone domain"/>
    <property type="match status" value="1"/>
</dbReference>
<dbReference type="InterPro" id="IPR000981">
    <property type="entry name" value="Neurhyp_horm"/>
</dbReference>
<dbReference type="InterPro" id="IPR036387">
    <property type="entry name" value="Neurhyp_horm_dom_sf"/>
</dbReference>
<dbReference type="InterPro" id="IPR022423">
    <property type="entry name" value="Neurohypophysial_hormone_CS"/>
</dbReference>
<dbReference type="PANTHER" id="PTHR11681">
    <property type="entry name" value="NEUROPHYSIN"/>
    <property type="match status" value="1"/>
</dbReference>
<dbReference type="PANTHER" id="PTHR11681:SF9">
    <property type="entry name" value="VASOPRESSIN-NEUROPHYSIN 2-COPEPTIN"/>
    <property type="match status" value="1"/>
</dbReference>
<dbReference type="Pfam" id="PF00220">
    <property type="entry name" value="Hormone_4"/>
    <property type="match status" value="1"/>
</dbReference>
<dbReference type="Pfam" id="PF00184">
    <property type="entry name" value="Hormone_5"/>
    <property type="match status" value="1"/>
</dbReference>
<dbReference type="PIRSF" id="PIRSF001815">
    <property type="entry name" value="Nonapeptide_hormone_precursor"/>
    <property type="match status" value="1"/>
</dbReference>
<dbReference type="PRINTS" id="PR00831">
    <property type="entry name" value="NEUROPHYSIN"/>
</dbReference>
<dbReference type="SMART" id="SM00003">
    <property type="entry name" value="NH"/>
    <property type="match status" value="1"/>
</dbReference>
<dbReference type="SUPFAM" id="SSF49606">
    <property type="entry name" value="Neurophysin II"/>
    <property type="match status" value="1"/>
</dbReference>
<dbReference type="PROSITE" id="PS00264">
    <property type="entry name" value="NEUROHYPOPHYS_HORM"/>
    <property type="match status" value="1"/>
</dbReference>
<comment type="function">
    <text>Neurophysin 2 specifically binds vasopressin.</text>
</comment>
<comment type="function">
    <text evidence="2">Vasopressin has a direct antidiuretic action on the kidney, it also causes vasoconstriction of the peripheral vessels. Acts by binding to vasopressin receptors (V1bR/AVPR1B, V1aR/AVPR1A, and V2R/AVPR2) (By similarity).</text>
</comment>
<comment type="subunit">
    <text evidence="2">Interacts with vasopressin receptors V1bR/AVPR1B (Ki=85 pM), V1aR/AVPR1A (Ki=0.6 nM) and V2R/AVPR2 (Ki=4.9 nM) (By similarity). Interacts with oxytocin receptor (OXTR) (Ki=110 nM) (By similarity).</text>
</comment>
<comment type="subcellular location">
    <subcellularLocation>
        <location>Secreted</location>
    </subcellularLocation>
</comment>
<comment type="miscellaneous">
    <text>X's have been placed at positions 10-12 by homology with the complete sequence of the bovine precursor.</text>
</comment>
<comment type="similarity">
    <text evidence="4">Belongs to the vasopressin/oxytocin family.</text>
</comment>